<accession>B6EPP2</accession>
<proteinExistence type="inferred from homology"/>
<evidence type="ECO:0000255" key="1">
    <source>
        <dbReference type="HAMAP-Rule" id="MF_00373"/>
    </source>
</evidence>
<evidence type="ECO:0000256" key="2">
    <source>
        <dbReference type="SAM" id="MobiDB-lite"/>
    </source>
</evidence>
<evidence type="ECO:0000305" key="3"/>
<dbReference type="EMBL" id="FM178379">
    <property type="protein sequence ID" value="CAQ77876.1"/>
    <property type="molecule type" value="Genomic_DNA"/>
</dbReference>
<dbReference type="RefSeq" id="WP_012549069.1">
    <property type="nucleotide sequence ID" value="NC_011312.1"/>
</dbReference>
<dbReference type="SMR" id="B6EPP2"/>
<dbReference type="KEGG" id="vsa:VSAL_I0191"/>
<dbReference type="eggNOG" id="COG0227">
    <property type="taxonomic scope" value="Bacteria"/>
</dbReference>
<dbReference type="HOGENOM" id="CLU_064548_3_1_6"/>
<dbReference type="Proteomes" id="UP000001730">
    <property type="component" value="Chromosome 1"/>
</dbReference>
<dbReference type="GO" id="GO:0022625">
    <property type="term" value="C:cytosolic large ribosomal subunit"/>
    <property type="evidence" value="ECO:0007669"/>
    <property type="project" value="TreeGrafter"/>
</dbReference>
<dbReference type="GO" id="GO:0003735">
    <property type="term" value="F:structural constituent of ribosome"/>
    <property type="evidence" value="ECO:0007669"/>
    <property type="project" value="InterPro"/>
</dbReference>
<dbReference type="GO" id="GO:0006412">
    <property type="term" value="P:translation"/>
    <property type="evidence" value="ECO:0007669"/>
    <property type="project" value="UniProtKB-UniRule"/>
</dbReference>
<dbReference type="FunFam" id="2.30.170.40:FF:000001">
    <property type="entry name" value="50S ribosomal protein L28"/>
    <property type="match status" value="1"/>
</dbReference>
<dbReference type="Gene3D" id="2.30.170.40">
    <property type="entry name" value="Ribosomal protein L28/L24"/>
    <property type="match status" value="1"/>
</dbReference>
<dbReference type="HAMAP" id="MF_00373">
    <property type="entry name" value="Ribosomal_bL28"/>
    <property type="match status" value="1"/>
</dbReference>
<dbReference type="InterPro" id="IPR026569">
    <property type="entry name" value="Ribosomal_bL28"/>
</dbReference>
<dbReference type="InterPro" id="IPR034704">
    <property type="entry name" value="Ribosomal_bL28/bL31-like_sf"/>
</dbReference>
<dbReference type="InterPro" id="IPR001383">
    <property type="entry name" value="Ribosomal_bL28_bact-type"/>
</dbReference>
<dbReference type="InterPro" id="IPR037147">
    <property type="entry name" value="Ribosomal_bL28_sf"/>
</dbReference>
<dbReference type="NCBIfam" id="TIGR00009">
    <property type="entry name" value="L28"/>
    <property type="match status" value="1"/>
</dbReference>
<dbReference type="PANTHER" id="PTHR13528">
    <property type="entry name" value="39S RIBOSOMAL PROTEIN L28, MITOCHONDRIAL"/>
    <property type="match status" value="1"/>
</dbReference>
<dbReference type="PANTHER" id="PTHR13528:SF2">
    <property type="entry name" value="LARGE RIBOSOMAL SUBUNIT PROTEIN BL28M"/>
    <property type="match status" value="1"/>
</dbReference>
<dbReference type="Pfam" id="PF00830">
    <property type="entry name" value="Ribosomal_L28"/>
    <property type="match status" value="1"/>
</dbReference>
<dbReference type="SUPFAM" id="SSF143800">
    <property type="entry name" value="L28p-like"/>
    <property type="match status" value="1"/>
</dbReference>
<name>RL28_ALISL</name>
<keyword id="KW-0687">Ribonucleoprotein</keyword>
<keyword id="KW-0689">Ribosomal protein</keyword>
<comment type="similarity">
    <text evidence="1">Belongs to the bacterial ribosomal protein bL28 family.</text>
</comment>
<gene>
    <name evidence="1" type="primary">rpmB</name>
    <name type="ordered locus">VSAL_I0191</name>
</gene>
<feature type="chain" id="PRO_1000121576" description="Large ribosomal subunit protein bL28">
    <location>
        <begin position="1"/>
        <end position="78"/>
    </location>
</feature>
<feature type="region of interest" description="Disordered" evidence="2">
    <location>
        <begin position="1"/>
        <end position="25"/>
    </location>
</feature>
<sequence>MSRVCQVTGKRPAVGNNRSHAKNATKRRFLPNLQTHRFWVESEKRFVKLRLTAKGMRIIDKKGIDVVLSEMRARGENV</sequence>
<reference key="1">
    <citation type="journal article" date="2008" name="BMC Genomics">
        <title>The genome sequence of the fish pathogen Aliivibrio salmonicida strain LFI1238 shows extensive evidence of gene decay.</title>
        <authorList>
            <person name="Hjerde E."/>
            <person name="Lorentzen M.S."/>
            <person name="Holden M.T."/>
            <person name="Seeger K."/>
            <person name="Paulsen S."/>
            <person name="Bason N."/>
            <person name="Churcher C."/>
            <person name="Harris D."/>
            <person name="Norbertczak H."/>
            <person name="Quail M.A."/>
            <person name="Sanders S."/>
            <person name="Thurston S."/>
            <person name="Parkhill J."/>
            <person name="Willassen N.P."/>
            <person name="Thomson N.R."/>
        </authorList>
    </citation>
    <scope>NUCLEOTIDE SEQUENCE [LARGE SCALE GENOMIC DNA]</scope>
    <source>
        <strain>LFI1238</strain>
    </source>
</reference>
<protein>
    <recommendedName>
        <fullName evidence="1">Large ribosomal subunit protein bL28</fullName>
    </recommendedName>
    <alternativeName>
        <fullName evidence="3">50S ribosomal protein L28</fullName>
    </alternativeName>
</protein>
<organism>
    <name type="scientific">Aliivibrio salmonicida (strain LFI1238)</name>
    <name type="common">Vibrio salmonicida (strain LFI1238)</name>
    <dbReference type="NCBI Taxonomy" id="316275"/>
    <lineage>
        <taxon>Bacteria</taxon>
        <taxon>Pseudomonadati</taxon>
        <taxon>Pseudomonadota</taxon>
        <taxon>Gammaproteobacteria</taxon>
        <taxon>Vibrionales</taxon>
        <taxon>Vibrionaceae</taxon>
        <taxon>Aliivibrio</taxon>
    </lineage>
</organism>